<gene>
    <name evidence="1" type="primary">atpE</name>
    <name type="ordered locus">PLES_59551</name>
</gene>
<reference key="1">
    <citation type="journal article" date="2009" name="Genome Res.">
        <title>Newly introduced genomic prophage islands are critical determinants of in vivo competitiveness in the Liverpool epidemic strain of Pseudomonas aeruginosa.</title>
        <authorList>
            <person name="Winstanley C."/>
            <person name="Langille M.G.I."/>
            <person name="Fothergill J.L."/>
            <person name="Kukavica-Ibrulj I."/>
            <person name="Paradis-Bleau C."/>
            <person name="Sanschagrin F."/>
            <person name="Thomson N.R."/>
            <person name="Winsor G.L."/>
            <person name="Quail M.A."/>
            <person name="Lennard N."/>
            <person name="Bignell A."/>
            <person name="Clarke L."/>
            <person name="Seeger K."/>
            <person name="Saunders D."/>
            <person name="Harris D."/>
            <person name="Parkhill J."/>
            <person name="Hancock R.E.W."/>
            <person name="Brinkman F.S.L."/>
            <person name="Levesque R.C."/>
        </authorList>
    </citation>
    <scope>NUCLEOTIDE SEQUENCE [LARGE SCALE GENOMIC DNA]</scope>
    <source>
        <strain>LESB58</strain>
    </source>
</reference>
<accession>B7V796</accession>
<keyword id="KW-0066">ATP synthesis</keyword>
<keyword id="KW-0997">Cell inner membrane</keyword>
<keyword id="KW-1003">Cell membrane</keyword>
<keyword id="KW-0138">CF(0)</keyword>
<keyword id="KW-0375">Hydrogen ion transport</keyword>
<keyword id="KW-0406">Ion transport</keyword>
<keyword id="KW-0446">Lipid-binding</keyword>
<keyword id="KW-0472">Membrane</keyword>
<keyword id="KW-0812">Transmembrane</keyword>
<keyword id="KW-1133">Transmembrane helix</keyword>
<keyword id="KW-0813">Transport</keyword>
<proteinExistence type="inferred from homology"/>
<evidence type="ECO:0000255" key="1">
    <source>
        <dbReference type="HAMAP-Rule" id="MF_01396"/>
    </source>
</evidence>
<sequence>METVVGLTAIAVALLIGLGALGTAIGFGLLGGKFLEGAARQPEMVPMLQVKMFIVAGLLDAVTMIGVGIALFFTFANPFVGQIAG</sequence>
<name>ATPL_PSEA8</name>
<protein>
    <recommendedName>
        <fullName evidence="1">ATP synthase subunit c</fullName>
    </recommendedName>
    <alternativeName>
        <fullName evidence="1">ATP synthase F(0) sector subunit c</fullName>
    </alternativeName>
    <alternativeName>
        <fullName evidence="1">F-type ATPase subunit c</fullName>
        <shortName evidence="1">F-ATPase subunit c</shortName>
    </alternativeName>
    <alternativeName>
        <fullName evidence="1">Lipid-binding protein</fullName>
    </alternativeName>
</protein>
<feature type="chain" id="PRO_1000184437" description="ATP synthase subunit c">
    <location>
        <begin position="1"/>
        <end position="85"/>
    </location>
</feature>
<feature type="transmembrane region" description="Helical" evidence="1">
    <location>
        <begin position="10"/>
        <end position="30"/>
    </location>
</feature>
<feature type="transmembrane region" description="Helical" evidence="1">
    <location>
        <begin position="53"/>
        <end position="73"/>
    </location>
</feature>
<feature type="site" description="Reversibly protonated during proton transport" evidence="1">
    <location>
        <position position="60"/>
    </location>
</feature>
<dbReference type="EMBL" id="FM209186">
    <property type="protein sequence ID" value="CAW30709.1"/>
    <property type="molecule type" value="Genomic_DNA"/>
</dbReference>
<dbReference type="RefSeq" id="WP_003097235.1">
    <property type="nucleotide sequence ID" value="NC_011770.1"/>
</dbReference>
<dbReference type="SMR" id="B7V796"/>
<dbReference type="GeneID" id="98280758"/>
<dbReference type="KEGG" id="pag:PLES_59551"/>
<dbReference type="HOGENOM" id="CLU_148047_1_0_6"/>
<dbReference type="GO" id="GO:0005886">
    <property type="term" value="C:plasma membrane"/>
    <property type="evidence" value="ECO:0007669"/>
    <property type="project" value="UniProtKB-SubCell"/>
</dbReference>
<dbReference type="GO" id="GO:0045259">
    <property type="term" value="C:proton-transporting ATP synthase complex"/>
    <property type="evidence" value="ECO:0007669"/>
    <property type="project" value="UniProtKB-KW"/>
</dbReference>
<dbReference type="GO" id="GO:0033177">
    <property type="term" value="C:proton-transporting two-sector ATPase complex, proton-transporting domain"/>
    <property type="evidence" value="ECO:0007669"/>
    <property type="project" value="InterPro"/>
</dbReference>
<dbReference type="GO" id="GO:0008289">
    <property type="term" value="F:lipid binding"/>
    <property type="evidence" value="ECO:0007669"/>
    <property type="project" value="UniProtKB-KW"/>
</dbReference>
<dbReference type="GO" id="GO:0046933">
    <property type="term" value="F:proton-transporting ATP synthase activity, rotational mechanism"/>
    <property type="evidence" value="ECO:0007669"/>
    <property type="project" value="UniProtKB-UniRule"/>
</dbReference>
<dbReference type="CDD" id="cd18185">
    <property type="entry name" value="ATP-synt_Fo_c_ATPE"/>
    <property type="match status" value="1"/>
</dbReference>
<dbReference type="FunFam" id="1.20.20.10:FF:000002">
    <property type="entry name" value="ATP synthase subunit c"/>
    <property type="match status" value="1"/>
</dbReference>
<dbReference type="Gene3D" id="1.20.20.10">
    <property type="entry name" value="F1F0 ATP synthase subunit C"/>
    <property type="match status" value="1"/>
</dbReference>
<dbReference type="HAMAP" id="MF_01396">
    <property type="entry name" value="ATP_synth_c_bact"/>
    <property type="match status" value="1"/>
</dbReference>
<dbReference type="InterPro" id="IPR005953">
    <property type="entry name" value="ATP_synth_csu_bac/chlpt"/>
</dbReference>
<dbReference type="InterPro" id="IPR000454">
    <property type="entry name" value="ATP_synth_F0_csu"/>
</dbReference>
<dbReference type="InterPro" id="IPR020537">
    <property type="entry name" value="ATP_synth_F0_csu_DDCD_BS"/>
</dbReference>
<dbReference type="InterPro" id="IPR038662">
    <property type="entry name" value="ATP_synth_F0_csu_sf"/>
</dbReference>
<dbReference type="InterPro" id="IPR002379">
    <property type="entry name" value="ATPase_proteolipid_c-like_dom"/>
</dbReference>
<dbReference type="InterPro" id="IPR035921">
    <property type="entry name" value="F/V-ATP_Csub_sf"/>
</dbReference>
<dbReference type="NCBIfam" id="TIGR01260">
    <property type="entry name" value="ATP_synt_c"/>
    <property type="match status" value="1"/>
</dbReference>
<dbReference type="NCBIfam" id="NF005363">
    <property type="entry name" value="PRK06876.1"/>
    <property type="match status" value="1"/>
</dbReference>
<dbReference type="Pfam" id="PF00137">
    <property type="entry name" value="ATP-synt_C"/>
    <property type="match status" value="1"/>
</dbReference>
<dbReference type="PRINTS" id="PR00124">
    <property type="entry name" value="ATPASEC"/>
</dbReference>
<dbReference type="SUPFAM" id="SSF81333">
    <property type="entry name" value="F1F0 ATP synthase subunit C"/>
    <property type="match status" value="1"/>
</dbReference>
<dbReference type="PROSITE" id="PS00605">
    <property type="entry name" value="ATPASE_C"/>
    <property type="match status" value="1"/>
</dbReference>
<organism>
    <name type="scientific">Pseudomonas aeruginosa (strain LESB58)</name>
    <dbReference type="NCBI Taxonomy" id="557722"/>
    <lineage>
        <taxon>Bacteria</taxon>
        <taxon>Pseudomonadati</taxon>
        <taxon>Pseudomonadota</taxon>
        <taxon>Gammaproteobacteria</taxon>
        <taxon>Pseudomonadales</taxon>
        <taxon>Pseudomonadaceae</taxon>
        <taxon>Pseudomonas</taxon>
    </lineage>
</organism>
<comment type="function">
    <text evidence="1">F(1)F(0) ATP synthase produces ATP from ADP in the presence of a proton or sodium gradient. F-type ATPases consist of two structural domains, F(1) containing the extramembraneous catalytic core and F(0) containing the membrane proton channel, linked together by a central stalk and a peripheral stalk. During catalysis, ATP synthesis in the catalytic domain of F(1) is coupled via a rotary mechanism of the central stalk subunits to proton translocation.</text>
</comment>
<comment type="function">
    <text evidence="1">Key component of the F(0) channel; it plays a direct role in translocation across the membrane. A homomeric c-ring of between 10-14 subunits forms the central stalk rotor element with the F(1) delta and epsilon subunits.</text>
</comment>
<comment type="subunit">
    <text evidence="1">F-type ATPases have 2 components, F(1) - the catalytic core - and F(0) - the membrane proton channel. F(1) has five subunits: alpha(3), beta(3), gamma(1), delta(1), epsilon(1). F(0) has three main subunits: a(1), b(2) and c(10-14). The alpha and beta chains form an alternating ring which encloses part of the gamma chain. F(1) is attached to F(0) by a central stalk formed by the gamma and epsilon chains, while a peripheral stalk is formed by the delta and b chains.</text>
</comment>
<comment type="subcellular location">
    <subcellularLocation>
        <location evidence="1">Cell inner membrane</location>
        <topology evidence="1">Multi-pass membrane protein</topology>
    </subcellularLocation>
</comment>
<comment type="similarity">
    <text evidence="1">Belongs to the ATPase C chain family.</text>
</comment>